<protein>
    <recommendedName>
        <fullName>Terminase small subunit</fullName>
    </recommendedName>
    <alternativeName>
        <fullName>G1P</fullName>
    </alternativeName>
    <alternativeName>
        <fullName>Terminase, small subunit gp1</fullName>
    </alternativeName>
</protein>
<keyword id="KW-0024">Alternative initiation</keyword>
<keyword id="KW-0903">Direct protein sequencing</keyword>
<keyword id="KW-0238">DNA-binding</keyword>
<keyword id="KW-1185">Reference proteome</keyword>
<keyword id="KW-0231">Viral genome packaging</keyword>
<keyword id="KW-1188">Viral release from host cell</keyword>
<organismHost>
    <name type="scientific">Bacillus subtilis</name>
    <dbReference type="NCBI Taxonomy" id="1423"/>
</organismHost>
<evidence type="ECO:0000269" key="1">
    <source>
    </source>
</evidence>
<evidence type="ECO:0000303" key="2">
    <source>
    </source>
</evidence>
<evidence type="ECO:0000305" key="3"/>
<evidence type="ECO:0000305" key="4">
    <source>
    </source>
</evidence>
<evidence type="ECO:0000305" key="5">
    <source>
    </source>
</evidence>
<organism>
    <name type="scientific">Bacillus phage SPP1</name>
    <name type="common">Bacteriophage SPP1</name>
    <dbReference type="NCBI Taxonomy" id="10724"/>
    <lineage>
        <taxon>Viruses</taxon>
        <taxon>Duplodnaviria</taxon>
        <taxon>Heunggongvirae</taxon>
        <taxon>Uroviricota</taxon>
        <taxon>Caudoviricetes</taxon>
    </lineage>
</organism>
<reference key="1">
    <citation type="journal article" date="1992" name="J. Mol. Biol.">
        <title>Molecular analysis of the Bacillus subtilis bacteriophage SPP1 region encompassing genes 1 to 6. The products of gene 1 and gene 2 are required for pac cleavage.</title>
        <authorList>
            <person name="Chai S."/>
            <person name="Bravo A."/>
            <person name="Lueder G."/>
            <person name="Nedlin A."/>
            <person name="Trautner T.A."/>
            <person name="Alonso J.C."/>
        </authorList>
    </citation>
    <scope>NUCLEOTIDE SEQUENCE [GENOMIC DNA]</scope>
</reference>
<reference key="2">
    <citation type="journal article" date="1994" name="Virology">
        <title>Analysis of the Bacillus subtilis bacteriophages SPP1 and SF6 gene 1 product: a protein involved in the initiation of headful packaging.</title>
        <authorList>
            <person name="Chai S."/>
            <person name="Kruft V."/>
            <person name="Alonso J.C."/>
        </authorList>
    </citation>
    <scope>NUCLEOTIDE SEQUENCE [GENOMIC DNA]</scope>
    <scope>PROTEIN SEQUENCE OF 2-26 AND 64-91</scope>
</reference>
<reference key="3">
    <citation type="journal article" date="1997" name="Gene">
        <title>The complete nucleotide sequence and functional organization of Bacillus subtilis bacteriophage SPP1.</title>
        <authorList>
            <person name="Alonso J.C."/>
            <person name="Luder G."/>
            <person name="Stiege A.C."/>
            <person name="Chai S."/>
            <person name="Weise F."/>
            <person name="Trautner T.A."/>
        </authorList>
    </citation>
    <scope>NUCLEOTIDE SEQUENCE [LARGE SCALE GENOMIC DNA]</scope>
</reference>
<reference key="4">
    <citation type="submission" date="2006-05" db="EMBL/GenBank/DDBJ databases">
        <title>The DNA-binding domain of bacteriophage SF6 small terminase subunit.</title>
        <authorList>
            <person name="Benini S."/>
            <person name="Chechik M."/>
            <person name="Ortiz-Lombardia M."/>
            <person name="Polier S."/>
            <person name="Shevtsov M.B."/>
            <person name="De Luchi D."/>
            <person name="Alonso J.C."/>
            <person name="Antson A.A."/>
        </authorList>
    </citation>
    <scope>NUCLEOTIDE SEQUENCE [GENOMIC DNA]</scope>
</reference>
<reference key="5">
    <citation type="journal article" date="2003" name="J. Biol. Chem.">
        <title>Bacillus subtilis bacteriophage SPP1 DNA packaging motor requires terminase and portal proteins.</title>
        <authorList>
            <person name="Camacho A.G."/>
            <person name="Gual A."/>
            <person name="Lurz R."/>
            <person name="Tavares P."/>
            <person name="Alonso J.C."/>
        </authorList>
    </citation>
    <scope>FUNCTION</scope>
</reference>
<reference key="6">
    <citation type="journal article" date="2021" name="Virology">
        <title>The coevolution of large and small terminases of bacteriophages is a result of purifying selection leading to phenotypic stabilization.</title>
        <authorList>
            <person name="Wangchuk J."/>
            <person name="Chatterjee A."/>
            <person name="Patil S."/>
            <person name="Madugula S.K."/>
            <person name="Kondabagil K."/>
        </authorList>
    </citation>
    <scope>DOMAIN</scope>
</reference>
<reference key="7">
    <citation type="journal article" date="2013" name="Virus Res.">
        <title>Headful DNA packaging: bacteriophage SPP1 as a model system.</title>
        <authorList>
            <person name="Oliveira L."/>
            <person name="Tavares P."/>
            <person name="Alonso J.C."/>
        </authorList>
    </citation>
    <scope>REVIEW</scope>
</reference>
<proteinExistence type="evidence at protein level"/>
<sequence length="147" mass="16334">MGEVKGKWTPKLERFVDEYFINGMNATKAAIAAGYSKKSASTIAAENMQKPHVRARIEERLAQMDKKRIMQAEEVLEHLTRIALGQEKEQVLMGIGKGAETKTHVEVSAKDRIKALELLGKAHAVFTDKQKVETNQVIIVDDSGDAE</sequence>
<comment type="function">
    <text evidence="2 4">The terminase small subunit specifically recognizes the non-adjacent pacL and pacR packaging subsites and regulates the ATPase activity of the terminase large subunit. The terminase lies at a unique vertex of the procapsid and is composed of two subunits, a small terminase subunit involved in viral DNA recognition (packaging 'pac' sequence), and a large terminase subunit possessing endonucleolytic and ATPase activities. Both terminase subunits heterooligomerize and are docked on the portal protein to form the packaging machine. The terminase large subunit exhibits endonuclease activity and cleaves the viral genome concatemer once the capsid is full (headful packaging) (PubMed:23419885). Once the capsid is packaged with the DNA, the terminase complex is substituted by neck proteins.</text>
</comment>
<comment type="subunit">
    <text evidence="4">Homodecamer. Interacts with the terminase large subunit gp2; the active complex is probably composed of a one monomer of gp2 and two or more decamers of gp1.</text>
</comment>
<comment type="alternative products">
    <event type="alternative initiation"/>
    <isoform>
        <id>P54307-1</id>
        <name>G1P</name>
        <sequence type="displayed"/>
    </isoform>
    <isoform>
        <id>P54307-2</id>
        <name>G1P*</name>
        <sequence type="described" ref="VSP_018686"/>
    </isoform>
</comment>
<comment type="domain">
    <text evidence="5">The N-terminus contains a helix-turn-helix (HTH) doamin that is involved in viral DNA binding.</text>
</comment>
<comment type="similarity">
    <text evidence="3">Belongs to the SPP1-like small terminase family.</text>
</comment>
<dbReference type="EMBL" id="X56064">
    <property type="protein sequence ID" value="CAA39536.1"/>
    <property type="status" value="ALT_SEQ"/>
    <property type="molecule type" value="Genomic_DNA"/>
</dbReference>
<dbReference type="EMBL" id="X97918">
    <property type="protein sequence ID" value="CAA66571.1"/>
    <property type="status" value="ALT_SEQ"/>
    <property type="molecule type" value="Genomic_DNA"/>
</dbReference>
<dbReference type="EMBL" id="AM268239">
    <property type="protein sequence ID" value="CAK29440.1"/>
    <property type="molecule type" value="Genomic_DNA"/>
</dbReference>
<dbReference type="PIR" id="S24450">
    <property type="entry name" value="S24450"/>
</dbReference>
<dbReference type="RefSeq" id="NP_690652.1">
    <property type="nucleotide sequence ID" value="NC_004166.2"/>
</dbReference>
<dbReference type="SMR" id="P54307"/>
<dbReference type="KEGG" id="vg:955251"/>
<dbReference type="OrthoDB" id="9975at10239"/>
<dbReference type="Proteomes" id="UP000002559">
    <property type="component" value="Genome"/>
</dbReference>
<dbReference type="GO" id="GO:0003677">
    <property type="term" value="F:DNA binding"/>
    <property type="evidence" value="ECO:0007669"/>
    <property type="project" value="UniProtKB-KW"/>
</dbReference>
<dbReference type="GO" id="GO:0051276">
    <property type="term" value="P:chromosome organization"/>
    <property type="evidence" value="ECO:0007669"/>
    <property type="project" value="InterPro"/>
</dbReference>
<dbReference type="Gene3D" id="6.10.140.2160">
    <property type="match status" value="1"/>
</dbReference>
<dbReference type="Gene3D" id="1.10.10.1400">
    <property type="entry name" value="Terminase, small subunit, N-terminal DNA-binding domain, HTH motif"/>
    <property type="match status" value="1"/>
</dbReference>
<dbReference type="InterPro" id="IPR052404">
    <property type="entry name" value="SPP1-like_terminase"/>
</dbReference>
<dbReference type="InterPro" id="IPR038713">
    <property type="entry name" value="Terminase_Gp1_N_sf"/>
</dbReference>
<dbReference type="InterPro" id="IPR005335">
    <property type="entry name" value="Terminase_ssu"/>
</dbReference>
<dbReference type="PANTHER" id="PTHR41328:SF2">
    <property type="entry name" value="TERMINASE SMALL SUBUNIT"/>
    <property type="match status" value="1"/>
</dbReference>
<dbReference type="PANTHER" id="PTHR41328">
    <property type="entry name" value="TERMINASE SMALL SUBUNIT-RELATED"/>
    <property type="match status" value="1"/>
</dbReference>
<dbReference type="Pfam" id="PF03592">
    <property type="entry name" value="Terminase_2"/>
    <property type="match status" value="1"/>
</dbReference>
<feature type="initiator methionine" description="Removed; by host" evidence="1">
    <location>
        <position position="1"/>
    </location>
</feature>
<feature type="chain" id="PRO_0000003378" description="Terminase small subunit">
    <location>
        <begin position="2"/>
        <end position="147"/>
    </location>
</feature>
<feature type="region of interest" description="Helix-turn-helix (HTH)" evidence="5">
    <location>
        <begin position="25"/>
        <end position="50"/>
    </location>
</feature>
<feature type="splice variant" id="VSP_018686" description="In isoform G1P*." evidence="3">
    <location>
        <begin position="1"/>
        <end position="63"/>
    </location>
</feature>
<gene>
    <name type="primary">1</name>
</gene>
<accession>P54307</accession>
<accession>Q1EJR9</accession>
<name>TERS_BPSPP</name>